<comment type="catalytic activity">
    <reaction evidence="1">
        <text>D-erythro-1-(imidazol-4-yl)glycerol 3-phosphate = 3-(imidazol-4-yl)-2-oxopropyl phosphate + H2O</text>
        <dbReference type="Rhea" id="RHEA:11040"/>
        <dbReference type="ChEBI" id="CHEBI:15377"/>
        <dbReference type="ChEBI" id="CHEBI:57766"/>
        <dbReference type="ChEBI" id="CHEBI:58278"/>
        <dbReference type="EC" id="4.2.1.19"/>
    </reaction>
</comment>
<comment type="pathway">
    <text evidence="1">Amino-acid biosynthesis; L-histidine biosynthesis; L-histidine from 5-phospho-alpha-D-ribose 1-diphosphate: step 6/9.</text>
</comment>
<comment type="subcellular location">
    <subcellularLocation>
        <location evidence="1">Cytoplasm</location>
    </subcellularLocation>
</comment>
<comment type="similarity">
    <text evidence="1">Belongs to the imidazoleglycerol-phosphate dehydratase family.</text>
</comment>
<accession>A0QHI0</accession>
<name>HIS7_MYCA1</name>
<sequence length="207" mass="22583">MTAVQAARRARIERRTKESDIVIELDLDGTGRVDVETGVPFYDHMLTALGSHASFDLTVRTTGDVEIEAHHTIEDTAIALGAALGQALGDKRGIRRFGDAFIPMDETLAHAAVDVSGRPYCVHSGEPDHLQHSTIAGSSVPYHTVINRHVFESLAMNARIALHVRVLYGRDPHHITEAQYKAVARALRQAVEPDPRVSDVPSTKGVL</sequence>
<gene>
    <name evidence="1" type="primary">hisB</name>
    <name type="ordered locus">MAV_3185</name>
</gene>
<proteinExistence type="inferred from homology"/>
<dbReference type="EC" id="4.2.1.19" evidence="1"/>
<dbReference type="EMBL" id="CP000479">
    <property type="protein sequence ID" value="ABK66221.1"/>
    <property type="molecule type" value="Genomic_DNA"/>
</dbReference>
<dbReference type="RefSeq" id="WP_003876207.1">
    <property type="nucleotide sequence ID" value="NC_008595.1"/>
</dbReference>
<dbReference type="SMR" id="A0QHI0"/>
<dbReference type="KEGG" id="mav:MAV_3185"/>
<dbReference type="HOGENOM" id="CLU_044308_3_0_11"/>
<dbReference type="UniPathway" id="UPA00031">
    <property type="reaction ID" value="UER00011"/>
</dbReference>
<dbReference type="Proteomes" id="UP000001574">
    <property type="component" value="Chromosome"/>
</dbReference>
<dbReference type="GO" id="GO:0005737">
    <property type="term" value="C:cytoplasm"/>
    <property type="evidence" value="ECO:0007669"/>
    <property type="project" value="UniProtKB-SubCell"/>
</dbReference>
<dbReference type="GO" id="GO:0004424">
    <property type="term" value="F:imidazoleglycerol-phosphate dehydratase activity"/>
    <property type="evidence" value="ECO:0007669"/>
    <property type="project" value="UniProtKB-UniRule"/>
</dbReference>
<dbReference type="GO" id="GO:0000105">
    <property type="term" value="P:L-histidine biosynthetic process"/>
    <property type="evidence" value="ECO:0007669"/>
    <property type="project" value="UniProtKB-UniRule"/>
</dbReference>
<dbReference type="CDD" id="cd07914">
    <property type="entry name" value="IGPD"/>
    <property type="match status" value="1"/>
</dbReference>
<dbReference type="FunFam" id="3.30.230.40:FF:000001">
    <property type="entry name" value="Imidazoleglycerol-phosphate dehydratase HisB"/>
    <property type="match status" value="1"/>
</dbReference>
<dbReference type="FunFam" id="3.30.230.40:FF:000003">
    <property type="entry name" value="Imidazoleglycerol-phosphate dehydratase HisB"/>
    <property type="match status" value="1"/>
</dbReference>
<dbReference type="Gene3D" id="3.30.230.40">
    <property type="entry name" value="Imidazole glycerol phosphate dehydratase, domain 1"/>
    <property type="match status" value="2"/>
</dbReference>
<dbReference type="HAMAP" id="MF_00076">
    <property type="entry name" value="HisB"/>
    <property type="match status" value="1"/>
</dbReference>
<dbReference type="InterPro" id="IPR038494">
    <property type="entry name" value="IGPD_sf"/>
</dbReference>
<dbReference type="InterPro" id="IPR000807">
    <property type="entry name" value="ImidazoleglycerolP_deHydtase"/>
</dbReference>
<dbReference type="InterPro" id="IPR020565">
    <property type="entry name" value="ImidazoleglycerP_deHydtase_CS"/>
</dbReference>
<dbReference type="InterPro" id="IPR020568">
    <property type="entry name" value="Ribosomal_Su5_D2-typ_SF"/>
</dbReference>
<dbReference type="NCBIfam" id="NF002110">
    <property type="entry name" value="PRK00951.1-6"/>
    <property type="match status" value="1"/>
</dbReference>
<dbReference type="NCBIfam" id="NF002111">
    <property type="entry name" value="PRK00951.2-1"/>
    <property type="match status" value="1"/>
</dbReference>
<dbReference type="NCBIfam" id="NF002114">
    <property type="entry name" value="PRK00951.2-4"/>
    <property type="match status" value="1"/>
</dbReference>
<dbReference type="PANTHER" id="PTHR23133:SF2">
    <property type="entry name" value="IMIDAZOLEGLYCEROL-PHOSPHATE DEHYDRATASE"/>
    <property type="match status" value="1"/>
</dbReference>
<dbReference type="PANTHER" id="PTHR23133">
    <property type="entry name" value="IMIDAZOLEGLYCEROL-PHOSPHATE DEHYDRATASE HIS7"/>
    <property type="match status" value="1"/>
</dbReference>
<dbReference type="Pfam" id="PF00475">
    <property type="entry name" value="IGPD"/>
    <property type="match status" value="1"/>
</dbReference>
<dbReference type="SUPFAM" id="SSF54211">
    <property type="entry name" value="Ribosomal protein S5 domain 2-like"/>
    <property type="match status" value="2"/>
</dbReference>
<dbReference type="PROSITE" id="PS00954">
    <property type="entry name" value="IGP_DEHYDRATASE_1"/>
    <property type="match status" value="1"/>
</dbReference>
<dbReference type="PROSITE" id="PS00955">
    <property type="entry name" value="IGP_DEHYDRATASE_2"/>
    <property type="match status" value="1"/>
</dbReference>
<organism>
    <name type="scientific">Mycobacterium avium (strain 104)</name>
    <dbReference type="NCBI Taxonomy" id="243243"/>
    <lineage>
        <taxon>Bacteria</taxon>
        <taxon>Bacillati</taxon>
        <taxon>Actinomycetota</taxon>
        <taxon>Actinomycetes</taxon>
        <taxon>Mycobacteriales</taxon>
        <taxon>Mycobacteriaceae</taxon>
        <taxon>Mycobacterium</taxon>
        <taxon>Mycobacterium avium complex (MAC)</taxon>
    </lineage>
</organism>
<evidence type="ECO:0000255" key="1">
    <source>
        <dbReference type="HAMAP-Rule" id="MF_00076"/>
    </source>
</evidence>
<keyword id="KW-0028">Amino-acid biosynthesis</keyword>
<keyword id="KW-0963">Cytoplasm</keyword>
<keyword id="KW-0368">Histidine biosynthesis</keyword>
<keyword id="KW-0456">Lyase</keyword>
<feature type="chain" id="PRO_1000010300" description="Imidazoleglycerol-phosphate dehydratase">
    <location>
        <begin position="1"/>
        <end position="207"/>
    </location>
</feature>
<protein>
    <recommendedName>
        <fullName evidence="1">Imidazoleglycerol-phosphate dehydratase</fullName>
        <shortName evidence="1">IGPD</shortName>
        <ecNumber evidence="1">4.2.1.19</ecNumber>
    </recommendedName>
</protein>
<reference key="1">
    <citation type="submission" date="2006-10" db="EMBL/GenBank/DDBJ databases">
        <authorList>
            <person name="Fleischmann R.D."/>
            <person name="Dodson R.J."/>
            <person name="Haft D.H."/>
            <person name="Merkel J.S."/>
            <person name="Nelson W.C."/>
            <person name="Fraser C.M."/>
        </authorList>
    </citation>
    <scope>NUCLEOTIDE SEQUENCE [LARGE SCALE GENOMIC DNA]</scope>
    <source>
        <strain>104</strain>
    </source>
</reference>